<feature type="chain" id="PRO_0000325793" description="N(6)-adenosine-methyltransferase non-catalytic subunit METTL14">
    <location>
        <begin position="1"/>
        <end position="459"/>
    </location>
</feature>
<feature type="region of interest" description="Disordered" evidence="4">
    <location>
        <begin position="50"/>
        <end position="73"/>
    </location>
</feature>
<feature type="region of interest" description="Interaction with METTL3" evidence="2">
    <location>
        <begin position="135"/>
        <end position="136"/>
    </location>
</feature>
<feature type="region of interest" description="Interaction with METTL3" evidence="2">
    <location>
        <begin position="237"/>
        <end position="238"/>
    </location>
</feature>
<feature type="region of interest" description="Positively charged region required for RNA-binding" evidence="2">
    <location>
        <begin position="245"/>
        <end position="254"/>
    </location>
</feature>
<feature type="region of interest" description="Interaction with METTL3" evidence="2">
    <location>
        <begin position="255"/>
        <end position="258"/>
    </location>
</feature>
<feature type="region of interest" description="Interaction with METTL3" evidence="2">
    <location>
        <begin position="278"/>
        <end position="287"/>
    </location>
</feature>
<feature type="region of interest" description="Positively charged region required for RNA-binding" evidence="2">
    <location>
        <begin position="297"/>
        <end position="298"/>
    </location>
</feature>
<feature type="region of interest" description="Interaction with METTL3" evidence="2">
    <location>
        <begin position="308"/>
        <end position="312"/>
    </location>
</feature>
<feature type="region of interest" description="Disordered" evidence="4">
    <location>
        <begin position="392"/>
        <end position="459"/>
    </location>
</feature>
<feature type="compositionally biased region" description="Gly residues" evidence="4">
    <location>
        <begin position="409"/>
        <end position="423"/>
    </location>
</feature>
<feature type="compositionally biased region" description="Basic and acidic residues" evidence="4">
    <location>
        <begin position="425"/>
        <end position="443"/>
    </location>
</feature>
<feature type="compositionally biased region" description="Gly residues" evidence="4">
    <location>
        <begin position="444"/>
        <end position="453"/>
    </location>
</feature>
<feature type="site" description="Interaction with METTL3" evidence="2">
    <location>
        <position position="146"/>
    </location>
</feature>
<feature type="site" description="Interaction with METTL3" evidence="2">
    <location>
        <position position="242"/>
    </location>
</feature>
<feature type="site" description="Interaction with METTL3" evidence="2">
    <location>
        <position position="245"/>
    </location>
</feature>
<feature type="site" description="Interaction with METTL3" evidence="2">
    <location>
        <position position="298"/>
    </location>
</feature>
<feature type="site" description="Interaction with METTL3" evidence="2">
    <location>
        <position position="399"/>
    </location>
</feature>
<dbReference type="EMBL" id="AJ720249">
    <property type="protein sequence ID" value="CAG31908.1"/>
    <property type="molecule type" value="mRNA"/>
</dbReference>
<dbReference type="RefSeq" id="NP_001026319.1">
    <property type="nucleotide sequence ID" value="NM_001031148.2"/>
</dbReference>
<dbReference type="RefSeq" id="XP_015131762.1">
    <property type="nucleotide sequence ID" value="XM_015276276.1"/>
</dbReference>
<dbReference type="RefSeq" id="XP_015131763.1">
    <property type="nucleotide sequence ID" value="XM_015276277.1"/>
</dbReference>
<dbReference type="SMR" id="Q5ZK35"/>
<dbReference type="FunCoup" id="Q5ZK35">
    <property type="interactions" value="2120"/>
</dbReference>
<dbReference type="STRING" id="9031.ENSGALP00000019558"/>
<dbReference type="PaxDb" id="9031-ENSGALP00000041155"/>
<dbReference type="Ensembl" id="ENSGALT00010013277.1">
    <property type="protein sequence ID" value="ENSGALP00010007839.1"/>
    <property type="gene ID" value="ENSGALG00010005551.1"/>
</dbReference>
<dbReference type="GeneID" id="422684"/>
<dbReference type="KEGG" id="gga:422684"/>
<dbReference type="CTD" id="57721"/>
<dbReference type="VEuPathDB" id="HostDB:geneid_422684"/>
<dbReference type="eggNOG" id="KOG2097">
    <property type="taxonomic scope" value="Eukaryota"/>
</dbReference>
<dbReference type="GeneTree" id="ENSGT00550000075003"/>
<dbReference type="HOGENOM" id="CLU_046318_1_0_1"/>
<dbReference type="InParanoid" id="Q5ZK35"/>
<dbReference type="OMA" id="FNSELYQ"/>
<dbReference type="OrthoDB" id="14833at2759"/>
<dbReference type="PhylomeDB" id="Q5ZK35"/>
<dbReference type="TreeFam" id="TF323641"/>
<dbReference type="Reactome" id="R-GGA-72203">
    <property type="pathway name" value="Processing of Capped Intron-Containing Pre-mRNA"/>
</dbReference>
<dbReference type="PRO" id="PR:Q5ZK35"/>
<dbReference type="Proteomes" id="UP000000539">
    <property type="component" value="Chromosome 4"/>
</dbReference>
<dbReference type="Bgee" id="ENSGALG00000012000">
    <property type="expression patterns" value="Expressed in spermatocyte and 13 other cell types or tissues"/>
</dbReference>
<dbReference type="GO" id="GO:0005634">
    <property type="term" value="C:nucleus"/>
    <property type="evidence" value="ECO:0000250"/>
    <property type="project" value="UniProtKB"/>
</dbReference>
<dbReference type="GO" id="GO:0036396">
    <property type="term" value="C:RNA N6-methyladenosine methyltransferase complex"/>
    <property type="evidence" value="ECO:0000250"/>
    <property type="project" value="UniProtKB"/>
</dbReference>
<dbReference type="GO" id="GO:0003729">
    <property type="term" value="F:mRNA binding"/>
    <property type="evidence" value="ECO:0000250"/>
    <property type="project" value="UniProtKB"/>
</dbReference>
<dbReference type="GO" id="GO:0001734">
    <property type="term" value="F:mRNA m(6)A methyltransferase activity"/>
    <property type="evidence" value="ECO:0000250"/>
    <property type="project" value="UniProtKB"/>
</dbReference>
<dbReference type="GO" id="GO:0021861">
    <property type="term" value="P:forebrain radial glial cell differentiation"/>
    <property type="evidence" value="ECO:0000250"/>
    <property type="project" value="UniProtKB"/>
</dbReference>
<dbReference type="GO" id="GO:0042063">
    <property type="term" value="P:gliogenesis"/>
    <property type="evidence" value="ECO:0000250"/>
    <property type="project" value="UniProtKB"/>
</dbReference>
<dbReference type="GO" id="GO:0061157">
    <property type="term" value="P:mRNA destabilization"/>
    <property type="evidence" value="ECO:0000250"/>
    <property type="project" value="UniProtKB"/>
</dbReference>
<dbReference type="GO" id="GO:0016556">
    <property type="term" value="P:mRNA modification"/>
    <property type="evidence" value="ECO:0000318"/>
    <property type="project" value="GO_Central"/>
</dbReference>
<dbReference type="GO" id="GO:0006397">
    <property type="term" value="P:mRNA processing"/>
    <property type="evidence" value="ECO:0000250"/>
    <property type="project" value="UniProtKB"/>
</dbReference>
<dbReference type="GO" id="GO:0000398">
    <property type="term" value="P:mRNA splicing, via spliceosome"/>
    <property type="evidence" value="ECO:0000250"/>
    <property type="project" value="UniProtKB"/>
</dbReference>
<dbReference type="GO" id="GO:0001510">
    <property type="term" value="P:RNA methylation"/>
    <property type="evidence" value="ECO:0000250"/>
    <property type="project" value="UniProtKB"/>
</dbReference>
<dbReference type="GO" id="GO:0007283">
    <property type="term" value="P:spermatogenesis"/>
    <property type="evidence" value="ECO:0000250"/>
    <property type="project" value="UniProtKB"/>
</dbReference>
<dbReference type="GO" id="GO:0019827">
    <property type="term" value="P:stem cell population maintenance"/>
    <property type="evidence" value="ECO:0000250"/>
    <property type="project" value="UniProtKB"/>
</dbReference>
<dbReference type="InterPro" id="IPR045123">
    <property type="entry name" value="METTL14-like"/>
</dbReference>
<dbReference type="InterPro" id="IPR007757">
    <property type="entry name" value="MT-A70-like"/>
</dbReference>
<dbReference type="InterPro" id="IPR029063">
    <property type="entry name" value="SAM-dependent_MTases_sf"/>
</dbReference>
<dbReference type="PANTHER" id="PTHR13107">
    <property type="entry name" value="N6-ADENOSINE-METHYLTRANSFERASE NON-CATALYTIC SUBUNIT"/>
    <property type="match status" value="1"/>
</dbReference>
<dbReference type="PANTHER" id="PTHR13107:SF0">
    <property type="entry name" value="N6-ADENOSINE-METHYLTRANSFERASE NON-CATALYTIC SUBUNIT"/>
    <property type="match status" value="1"/>
</dbReference>
<dbReference type="Pfam" id="PF05063">
    <property type="entry name" value="MT-A70"/>
    <property type="match status" value="1"/>
</dbReference>
<dbReference type="SUPFAM" id="SSF53335">
    <property type="entry name" value="S-adenosyl-L-methionine-dependent methyltransferases"/>
    <property type="match status" value="1"/>
</dbReference>
<dbReference type="PROSITE" id="PS51143">
    <property type="entry name" value="MT_A70"/>
    <property type="match status" value="1"/>
</dbReference>
<dbReference type="PROSITE" id="PS51592">
    <property type="entry name" value="SAM_MTA70L_2"/>
    <property type="match status" value="1"/>
</dbReference>
<organism>
    <name type="scientific">Gallus gallus</name>
    <name type="common">Chicken</name>
    <dbReference type="NCBI Taxonomy" id="9031"/>
    <lineage>
        <taxon>Eukaryota</taxon>
        <taxon>Metazoa</taxon>
        <taxon>Chordata</taxon>
        <taxon>Craniata</taxon>
        <taxon>Vertebrata</taxon>
        <taxon>Euteleostomi</taxon>
        <taxon>Archelosauria</taxon>
        <taxon>Archosauria</taxon>
        <taxon>Dinosauria</taxon>
        <taxon>Saurischia</taxon>
        <taxon>Theropoda</taxon>
        <taxon>Coelurosauria</taxon>
        <taxon>Aves</taxon>
        <taxon>Neognathae</taxon>
        <taxon>Galloanserae</taxon>
        <taxon>Galliformes</taxon>
        <taxon>Phasianidae</taxon>
        <taxon>Phasianinae</taxon>
        <taxon>Gallus</taxon>
    </lineage>
</organism>
<name>MET14_CHICK</name>
<protein>
    <recommendedName>
        <fullName>N(6)-adenosine-methyltransferase non-catalytic subunit METTL14</fullName>
    </recommendedName>
    <alternativeName>
        <fullName>Methyltransferase-like protein 14</fullName>
    </alternativeName>
</protein>
<gene>
    <name type="primary">METTL14</name>
    <name type="ORF">RCJMB04_13h15</name>
</gene>
<comment type="function">
    <text evidence="1 2">The METTL3-METTL14 heterodimer forms a N6-methyltransferase complex that methylates adenosine residues at the N(6) position of some mRNAs and regulates the circadian clock, differentiation of embryonic stem cells and cortical neurogenesis. In the heterodimer formed with METTL3, METTL14 constitutes the RNA-binding scaffold that recognizes the substrate rather than the catalytic core. N6-methyladenosine (m6A), which takes place at the 5'-[AG]GAC-3' consensus sites of some mRNAs, plays a role in mRNA stability and processing.</text>
</comment>
<comment type="subunit">
    <text evidence="2">Heterodimer; heterodimerizes with METTL3 to form an antiparallel heterodimer that constitutes an active methyltransferase. Component of the WMM complex, a N6-methyltransferase complex composed of a catalytic subcomplex, named MAC, and of an associated subcomplex, named MACOM. The MAC subcomplex is composed of METTL3 and METTL14.</text>
</comment>
<comment type="subcellular location">
    <subcellularLocation>
        <location evidence="1">Nucleus</location>
    </subcellularLocation>
</comment>
<comment type="similarity">
    <text evidence="3">Belongs to the MT-A70-like family.</text>
</comment>
<accession>Q5ZK35</accession>
<proteinExistence type="evidence at transcript level"/>
<evidence type="ECO:0000250" key="1">
    <source>
        <dbReference type="UniProtKB" id="Q3UIK4"/>
    </source>
</evidence>
<evidence type="ECO:0000250" key="2">
    <source>
        <dbReference type="UniProtKB" id="Q9HCE5"/>
    </source>
</evidence>
<evidence type="ECO:0000255" key="3">
    <source>
        <dbReference type="PROSITE-ProRule" id="PRU00489"/>
    </source>
</evidence>
<evidence type="ECO:0000256" key="4">
    <source>
        <dbReference type="SAM" id="MobiDB-lite"/>
    </source>
</evidence>
<sequence>MNSRLQEIRERQKLRRQLLAQQLGAENADSIGAVLNSKDDQREIAETRETCRASYDTSAPNAKRKYPDEGEADEEEIEEYKDEVELQQDEENLPYEEEIYKDSSTFLKGTQSLNPHNDYCQHFVDTGHRPQNFIRDVGLADRFEEYPKLRELIRLKDELISKSNTPPMYLQADLEAFDIRELKSKFDVILLEPPLEEYYRETGITANEKCWTWDDIMKLEIEEIAAPRSFVFLWCGSGEGLDLGRVCLRKWGYRRCEDICWIKTNKNNPGKTKTLDPKAVFQRTKEHCLMGIKGTVRRSTDGDFIHANVDIDLIITEEPEIGNIEKPVEIFHIIEHFCLGRRRLHLFGRDSTIRPGWLTVGPTLTNSNFNAETYSSYFTAPNSHLTGCTEEIERLRPKSPPPKSKSDRGGGAPRGGGRGGTSAGRGERGRERNRTNFRGERGGFRGGRGGTHRGGFPTR</sequence>
<keyword id="KW-0221">Differentiation</keyword>
<keyword id="KW-0539">Nucleus</keyword>
<keyword id="KW-1185">Reference proteome</keyword>
<keyword id="KW-0694">RNA-binding</keyword>
<keyword id="KW-0744">Spermatogenesis</keyword>
<reference key="1">
    <citation type="journal article" date="2005" name="Genome Biol.">
        <title>Full-length cDNAs from chicken bursal lymphocytes to facilitate gene function analysis.</title>
        <authorList>
            <person name="Caldwell R.B."/>
            <person name="Kierzek A.M."/>
            <person name="Arakawa H."/>
            <person name="Bezzubov Y."/>
            <person name="Zaim J."/>
            <person name="Fiedler P."/>
            <person name="Kutter S."/>
            <person name="Blagodatski A."/>
            <person name="Kostovska D."/>
            <person name="Koter M."/>
            <person name="Plachy J."/>
            <person name="Carninci P."/>
            <person name="Hayashizaki Y."/>
            <person name="Buerstedde J.-M."/>
        </authorList>
    </citation>
    <scope>NUCLEOTIDE SEQUENCE [LARGE SCALE MRNA]</scope>
    <source>
        <strain>CB</strain>
        <tissue>Bursa of Fabricius</tissue>
    </source>
</reference>